<reference key="1">
    <citation type="submission" date="2006-08" db="EMBL/GenBank/DDBJ databases">
        <title>Complete sequence of chromosome 1 of Shewanella sp. MR-7.</title>
        <authorList>
            <person name="Copeland A."/>
            <person name="Lucas S."/>
            <person name="Lapidus A."/>
            <person name="Barry K."/>
            <person name="Detter J.C."/>
            <person name="Glavina del Rio T."/>
            <person name="Hammon N."/>
            <person name="Israni S."/>
            <person name="Dalin E."/>
            <person name="Tice H."/>
            <person name="Pitluck S."/>
            <person name="Kiss H."/>
            <person name="Brettin T."/>
            <person name="Bruce D."/>
            <person name="Han C."/>
            <person name="Tapia R."/>
            <person name="Gilna P."/>
            <person name="Schmutz J."/>
            <person name="Larimer F."/>
            <person name="Land M."/>
            <person name="Hauser L."/>
            <person name="Kyrpides N."/>
            <person name="Mikhailova N."/>
            <person name="Nealson K."/>
            <person name="Konstantinidis K."/>
            <person name="Klappenbach J."/>
            <person name="Tiedje J."/>
            <person name="Richardson P."/>
        </authorList>
    </citation>
    <scope>NUCLEOTIDE SEQUENCE [LARGE SCALE GENOMIC DNA]</scope>
    <source>
        <strain>MR-7</strain>
    </source>
</reference>
<protein>
    <recommendedName>
        <fullName evidence="1">Thymidine phosphorylase</fullName>
        <ecNumber evidence="1">2.4.2.4</ecNumber>
    </recommendedName>
    <alternativeName>
        <fullName evidence="1">TdRPase</fullName>
    </alternativeName>
</protein>
<gene>
    <name evidence="1" type="primary">deoA</name>
    <name type="ordered locus">Shewmr7_1103</name>
</gene>
<name>TYPH_SHESR</name>
<feature type="chain" id="PRO_1000069674" description="Thymidine phosphorylase">
    <location>
        <begin position="1"/>
        <end position="443"/>
    </location>
</feature>
<sequence length="443" mass="46864">MFLAQEIIRKKRNGLALSTEEIQFFVKGITTNAVSEGQIAALGMAVYFNDMNMDERIALTTAMRDSGTVLNWQSLGLNGPVIDKHSTGGVGDVISLMLGPMAAACGGYVPMISGRGLGHTGGTLDKFDAIPGYQTEPSSELFRKVVKDVGVAIIGQTGDLVPADKRFYSIRDNTATVESISLITASILSKKLACSLDALAMDVKVGSGAFMPTYEASEELARSIAAVANGAGTKTTALLTDMNQVLASCAGNAVEVKEAIDFLTGAYRNPRLYAVTMGLCAEMLLLGGLATDEADARAKLNRVLDNGRAAEIFGKMVSGLGGPVDFVENYSKYLPQSQIIRPVFADTQGYAHSMDTRELGLAVVTLGGGRRKPGDALDYSVGLTQVCALGDKIDASTPIAVIHAQSEDAFAQAEEAVKKAIRIDEVAPEKTPEIYAYIRAADL</sequence>
<dbReference type="EC" id="2.4.2.4" evidence="1"/>
<dbReference type="EMBL" id="CP000444">
    <property type="protein sequence ID" value="ABI42102.1"/>
    <property type="molecule type" value="Genomic_DNA"/>
</dbReference>
<dbReference type="SMR" id="Q0HXQ3"/>
<dbReference type="KEGG" id="shm:Shewmr7_1103"/>
<dbReference type="HOGENOM" id="CLU_025040_0_1_6"/>
<dbReference type="UniPathway" id="UPA00578">
    <property type="reaction ID" value="UER00638"/>
</dbReference>
<dbReference type="GO" id="GO:0005829">
    <property type="term" value="C:cytosol"/>
    <property type="evidence" value="ECO:0007669"/>
    <property type="project" value="TreeGrafter"/>
</dbReference>
<dbReference type="GO" id="GO:0004645">
    <property type="term" value="F:1,4-alpha-oligoglucan phosphorylase activity"/>
    <property type="evidence" value="ECO:0007669"/>
    <property type="project" value="InterPro"/>
</dbReference>
<dbReference type="GO" id="GO:0009032">
    <property type="term" value="F:thymidine phosphorylase activity"/>
    <property type="evidence" value="ECO:0007669"/>
    <property type="project" value="UniProtKB-UniRule"/>
</dbReference>
<dbReference type="GO" id="GO:0006206">
    <property type="term" value="P:pyrimidine nucleobase metabolic process"/>
    <property type="evidence" value="ECO:0007669"/>
    <property type="project" value="InterPro"/>
</dbReference>
<dbReference type="GO" id="GO:0046104">
    <property type="term" value="P:thymidine metabolic process"/>
    <property type="evidence" value="ECO:0007669"/>
    <property type="project" value="UniProtKB-UniRule"/>
</dbReference>
<dbReference type="FunFam" id="3.40.1030.10:FF:000001">
    <property type="entry name" value="Thymidine phosphorylase"/>
    <property type="match status" value="1"/>
</dbReference>
<dbReference type="FunFam" id="3.90.1170.30:FF:000001">
    <property type="entry name" value="Thymidine phosphorylase"/>
    <property type="match status" value="1"/>
</dbReference>
<dbReference type="Gene3D" id="3.40.1030.10">
    <property type="entry name" value="Nucleoside phosphorylase/phosphoribosyltransferase catalytic domain"/>
    <property type="match status" value="1"/>
</dbReference>
<dbReference type="Gene3D" id="3.90.1170.30">
    <property type="entry name" value="Pyrimidine nucleoside phosphorylase-like, C-terminal domain"/>
    <property type="match status" value="1"/>
</dbReference>
<dbReference type="Gene3D" id="1.20.970.10">
    <property type="entry name" value="Transferase, Pyrimidine Nucleoside Phosphorylase, Chain C"/>
    <property type="match status" value="1"/>
</dbReference>
<dbReference type="HAMAP" id="MF_01628">
    <property type="entry name" value="Thymid_phosp"/>
    <property type="match status" value="1"/>
</dbReference>
<dbReference type="InterPro" id="IPR000312">
    <property type="entry name" value="Glycosyl_Trfase_fam3"/>
</dbReference>
<dbReference type="InterPro" id="IPR017459">
    <property type="entry name" value="Glycosyl_Trfase_fam3_N_dom"/>
</dbReference>
<dbReference type="InterPro" id="IPR036320">
    <property type="entry name" value="Glycosyl_Trfase_fam3_N_dom_sf"/>
</dbReference>
<dbReference type="InterPro" id="IPR035902">
    <property type="entry name" value="Nuc_phospho_transferase"/>
</dbReference>
<dbReference type="InterPro" id="IPR036566">
    <property type="entry name" value="PYNP-like_C_sf"/>
</dbReference>
<dbReference type="InterPro" id="IPR013102">
    <property type="entry name" value="PYNP_C"/>
</dbReference>
<dbReference type="InterPro" id="IPR018090">
    <property type="entry name" value="Pyrmidine_PPas_bac/euk"/>
</dbReference>
<dbReference type="InterPro" id="IPR017872">
    <property type="entry name" value="Pyrmidine_PPase_CS"/>
</dbReference>
<dbReference type="InterPro" id="IPR000053">
    <property type="entry name" value="Thymidine/pyrmidine_PPase"/>
</dbReference>
<dbReference type="InterPro" id="IPR013465">
    <property type="entry name" value="Thymidine_Pase"/>
</dbReference>
<dbReference type="NCBIfam" id="NF004490">
    <property type="entry name" value="PRK05820.1"/>
    <property type="match status" value="1"/>
</dbReference>
<dbReference type="NCBIfam" id="TIGR02643">
    <property type="entry name" value="T_phosphoryl"/>
    <property type="match status" value="1"/>
</dbReference>
<dbReference type="NCBIfam" id="TIGR02644">
    <property type="entry name" value="Y_phosphoryl"/>
    <property type="match status" value="1"/>
</dbReference>
<dbReference type="PANTHER" id="PTHR10515">
    <property type="entry name" value="THYMIDINE PHOSPHORYLASE"/>
    <property type="match status" value="1"/>
</dbReference>
<dbReference type="PANTHER" id="PTHR10515:SF0">
    <property type="entry name" value="THYMIDINE PHOSPHORYLASE"/>
    <property type="match status" value="1"/>
</dbReference>
<dbReference type="Pfam" id="PF02885">
    <property type="entry name" value="Glycos_trans_3N"/>
    <property type="match status" value="1"/>
</dbReference>
<dbReference type="Pfam" id="PF00591">
    <property type="entry name" value="Glycos_transf_3"/>
    <property type="match status" value="1"/>
</dbReference>
<dbReference type="Pfam" id="PF07831">
    <property type="entry name" value="PYNP_C"/>
    <property type="match status" value="1"/>
</dbReference>
<dbReference type="PIRSF" id="PIRSF000478">
    <property type="entry name" value="TP_PyNP"/>
    <property type="match status" value="1"/>
</dbReference>
<dbReference type="SMART" id="SM00941">
    <property type="entry name" value="PYNP_C"/>
    <property type="match status" value="1"/>
</dbReference>
<dbReference type="SUPFAM" id="SSF52418">
    <property type="entry name" value="Nucleoside phosphorylase/phosphoribosyltransferase catalytic domain"/>
    <property type="match status" value="1"/>
</dbReference>
<dbReference type="SUPFAM" id="SSF47648">
    <property type="entry name" value="Nucleoside phosphorylase/phosphoribosyltransferase N-terminal domain"/>
    <property type="match status" value="1"/>
</dbReference>
<dbReference type="SUPFAM" id="SSF54680">
    <property type="entry name" value="Pyrimidine nucleoside phosphorylase C-terminal domain"/>
    <property type="match status" value="1"/>
</dbReference>
<dbReference type="PROSITE" id="PS00647">
    <property type="entry name" value="THYMID_PHOSPHORYLASE"/>
    <property type="match status" value="1"/>
</dbReference>
<evidence type="ECO:0000255" key="1">
    <source>
        <dbReference type="HAMAP-Rule" id="MF_01628"/>
    </source>
</evidence>
<comment type="function">
    <text evidence="1">The enzymes which catalyze the reversible phosphorolysis of pyrimidine nucleosides are involved in the degradation of these compounds and in their utilization as carbon and energy sources, or in the rescue of pyrimidine bases for nucleotide synthesis.</text>
</comment>
<comment type="catalytic activity">
    <reaction evidence="1">
        <text>thymidine + phosphate = 2-deoxy-alpha-D-ribose 1-phosphate + thymine</text>
        <dbReference type="Rhea" id="RHEA:16037"/>
        <dbReference type="ChEBI" id="CHEBI:17748"/>
        <dbReference type="ChEBI" id="CHEBI:17821"/>
        <dbReference type="ChEBI" id="CHEBI:43474"/>
        <dbReference type="ChEBI" id="CHEBI:57259"/>
        <dbReference type="EC" id="2.4.2.4"/>
    </reaction>
</comment>
<comment type="pathway">
    <text evidence="1">Pyrimidine metabolism; dTMP biosynthesis via salvage pathway; dTMP from thymine: step 1/2.</text>
</comment>
<comment type="subunit">
    <text evidence="1">Homodimer.</text>
</comment>
<comment type="similarity">
    <text evidence="1">Belongs to the thymidine/pyrimidine-nucleoside phosphorylase family.</text>
</comment>
<organism>
    <name type="scientific">Shewanella sp. (strain MR-7)</name>
    <dbReference type="NCBI Taxonomy" id="60481"/>
    <lineage>
        <taxon>Bacteria</taxon>
        <taxon>Pseudomonadati</taxon>
        <taxon>Pseudomonadota</taxon>
        <taxon>Gammaproteobacteria</taxon>
        <taxon>Alteromonadales</taxon>
        <taxon>Shewanellaceae</taxon>
        <taxon>Shewanella</taxon>
    </lineage>
</organism>
<proteinExistence type="inferred from homology"/>
<keyword id="KW-0328">Glycosyltransferase</keyword>
<keyword id="KW-0808">Transferase</keyword>
<accession>Q0HXQ3</accession>